<organism>
    <name type="scientific">Homo sapiens</name>
    <name type="common">Human</name>
    <dbReference type="NCBI Taxonomy" id="9606"/>
    <lineage>
        <taxon>Eukaryota</taxon>
        <taxon>Metazoa</taxon>
        <taxon>Chordata</taxon>
        <taxon>Craniata</taxon>
        <taxon>Vertebrata</taxon>
        <taxon>Euteleostomi</taxon>
        <taxon>Mammalia</taxon>
        <taxon>Eutheria</taxon>
        <taxon>Euarchontoglires</taxon>
        <taxon>Primates</taxon>
        <taxon>Haplorrhini</taxon>
        <taxon>Catarrhini</taxon>
        <taxon>Hominidae</taxon>
        <taxon>Homo</taxon>
    </lineage>
</organism>
<keyword id="KW-0002">3D-structure</keyword>
<keyword id="KW-0009">Actin-binding</keyword>
<keyword id="KW-0010">Activator</keyword>
<keyword id="KW-0175">Coiled coil</keyword>
<keyword id="KW-0963">Cytoplasm</keyword>
<keyword id="KW-0472">Membrane</keyword>
<keyword id="KW-0539">Nucleus</keyword>
<keyword id="KW-1267">Proteomics identification</keyword>
<keyword id="KW-1185">Reference proteome</keyword>
<keyword id="KW-0804">Transcription</keyword>
<keyword id="KW-0805">Transcription regulation</keyword>
<accession>Q9H204</accession>
<accession>Q9BZJ5</accession>
<evidence type="ECO:0000255" key="1"/>
<evidence type="ECO:0000256" key="2">
    <source>
        <dbReference type="SAM" id="MobiDB-lite"/>
    </source>
</evidence>
<evidence type="ECO:0000269" key="3">
    <source>
    </source>
</evidence>
<evidence type="ECO:0000269" key="4">
    <source>
    </source>
</evidence>
<evidence type="ECO:0000269" key="5">
    <source>
    </source>
</evidence>
<evidence type="ECO:0000269" key="6">
    <source>
    </source>
</evidence>
<evidence type="ECO:0000305" key="7"/>
<evidence type="ECO:0007829" key="8">
    <source>
        <dbReference type="PDB" id="7EMF"/>
    </source>
</evidence>
<reference key="1">
    <citation type="journal article" date="2002" name="Biochem. Biophys. Res. Commun.">
        <title>Identification of a novel endothelial-derived gene EG-1.</title>
        <authorList>
            <person name="Liu C."/>
            <person name="Zhang L."/>
            <person name="Shao Z.-M."/>
            <person name="Beatty P."/>
            <person name="Sartippour M."/>
            <person name="Lane T.F."/>
            <person name="Barsky S.H."/>
            <person name="Livingston E."/>
            <person name="Nguyen M.H."/>
        </authorList>
    </citation>
    <scope>NUCLEOTIDE SEQUENCE [MRNA]</scope>
    <scope>INDUCTION</scope>
</reference>
<reference key="2">
    <citation type="submission" date="2000-11" db="EMBL/GenBank/DDBJ databases">
        <title>Cloning of FKSG20, a novel gene expressed in adrenal gland tumor tissues.</title>
        <authorList>
            <person name="Wang Y.-G."/>
            <person name="Gong L."/>
        </authorList>
    </citation>
    <scope>NUCLEOTIDE SEQUENCE [MRNA]</scope>
</reference>
<reference key="3">
    <citation type="submission" date="2000-11" db="EMBL/GenBank/DDBJ databases">
        <title>A gene from tumor.</title>
        <authorList>
            <person name="Mai N."/>
            <person name="Liu C."/>
        </authorList>
    </citation>
    <scope>NUCLEOTIDE SEQUENCE [MRNA]</scope>
</reference>
<reference key="4">
    <citation type="journal article" date="2004" name="Genome Res.">
        <title>The status, quality, and expansion of the NIH full-length cDNA project: the Mammalian Gene Collection (MGC).</title>
        <authorList>
            <consortium name="The MGC Project Team"/>
        </authorList>
    </citation>
    <scope>NUCLEOTIDE SEQUENCE [LARGE SCALE MRNA]</scope>
    <source>
        <tissue>Lung</tissue>
    </source>
</reference>
<reference key="5">
    <citation type="journal article" date="2004" name="Mol. Cell">
        <title>A set of consensus mammalian mediator subunits identified by multidimensional protein identification technology.</title>
        <authorList>
            <person name="Sato S."/>
            <person name="Tomomori-Sato C."/>
            <person name="Parmely T.J."/>
            <person name="Florens L."/>
            <person name="Zybailov B."/>
            <person name="Swanson S.K."/>
            <person name="Banks C.A.S."/>
            <person name="Jin J."/>
            <person name="Cai Y."/>
            <person name="Washburn M.P."/>
            <person name="Conaway J.W."/>
            <person name="Conaway R.C."/>
        </authorList>
    </citation>
    <scope>IDENTIFICATION BY MASS SPECTROMETRY</scope>
    <scope>IDENTIFICATION IN THE MEDIATOR COMPLEX</scope>
</reference>
<reference key="6">
    <citation type="journal article" date="2004" name="Oncogene">
        <title>Magicin, a novel cytoskeletal protein associates with the NF2 tumor suppressor merlin and Grb2.</title>
        <authorList>
            <person name="Wiederhold T."/>
            <person name="Lee M.-F."/>
            <person name="James M."/>
            <person name="Neujahr R."/>
            <person name="Smith N."/>
            <person name="Murthy A."/>
            <person name="Hartwig J."/>
            <person name="Gusella J.F."/>
            <person name="Ramesh V."/>
        </authorList>
    </citation>
    <scope>FUNCTION IN SIGNALING</scope>
    <scope>SUBCELLULAR LOCATION</scope>
    <scope>TISSUE SPECIFICITY</scope>
    <scope>INTERACTION WITH ACTIN; NF2 AND GRB2</scope>
</reference>
<reference key="7">
    <citation type="journal article" date="2005" name="Mol. Cell">
        <title>MED1/TRAP220 exists predominantly in a TRAP/Mediator subpopulation enriched in RNA polymerase II and is required for ER-mediated transcription.</title>
        <authorList>
            <person name="Zhang X."/>
            <person name="Krutchinsky A."/>
            <person name="Fukuda A."/>
            <person name="Chen W."/>
            <person name="Yamamura S."/>
            <person name="Chait B.T."/>
            <person name="Roeder R.G."/>
        </authorList>
    </citation>
    <scope>INTERACTION WITH CCNC; MED1; MED6; MED12; MED13; MED16; MED17; MED20; MED21 AND MED24</scope>
    <scope>IDENTIFICATION BY MASS SPECTROMETRY</scope>
    <scope>IDENTIFICATION IN THE MEDIATOR COMPLEX</scope>
    <scope>ASSOCIATION OF THE MEDIATOR COMPLEX WITH RNA POLYMERASE II</scope>
</reference>
<reference key="8">
    <citation type="journal article" date="2011" name="BMC Syst. Biol.">
        <title>Initial characterization of the human central proteome.</title>
        <authorList>
            <person name="Burkard T.R."/>
            <person name="Planyavsky M."/>
            <person name="Kaupe I."/>
            <person name="Breitwieser F.P."/>
            <person name="Buerckstuemmer T."/>
            <person name="Bennett K.L."/>
            <person name="Superti-Furga G."/>
            <person name="Colinge J."/>
        </authorList>
    </citation>
    <scope>IDENTIFICATION BY MASS SPECTROMETRY [LARGE SCALE ANALYSIS]</scope>
</reference>
<proteinExistence type="evidence at protein level"/>
<protein>
    <recommendedName>
        <fullName>Mediator of RNA polymerase II transcription subunit 28</fullName>
    </recommendedName>
    <alternativeName>
        <fullName>Endothelial-derived protein 1</fullName>
    </alternativeName>
    <alternativeName>
        <fullName>Mediator complex subunit 28</fullName>
    </alternativeName>
    <alternativeName>
        <fullName>Merlin and Grb2-interacting cytoskeletal protein</fullName>
        <shortName>Magicin</shortName>
    </alternativeName>
    <alternativeName>
        <fullName>Tumor angiogenesis marker EG-1</fullName>
    </alternativeName>
</protein>
<dbReference type="EMBL" id="AF321617">
    <property type="protein sequence ID" value="AAG38612.1"/>
    <property type="molecule type" value="mRNA"/>
</dbReference>
<dbReference type="EMBL" id="AF358829">
    <property type="protein sequence ID" value="AAK32724.1"/>
    <property type="molecule type" value="mRNA"/>
</dbReference>
<dbReference type="EMBL" id="AF318059">
    <property type="protein sequence ID" value="AAL26906.1"/>
    <property type="molecule type" value="mRNA"/>
</dbReference>
<dbReference type="EMBL" id="AF317680">
    <property type="protein sequence ID" value="AAK11563.1"/>
    <property type="status" value="ALT_FRAME"/>
    <property type="molecule type" value="mRNA"/>
</dbReference>
<dbReference type="EMBL" id="BC011936">
    <property type="protein sequence ID" value="AAH11936.1"/>
    <property type="molecule type" value="mRNA"/>
</dbReference>
<dbReference type="CCDS" id="CCDS33963.1"/>
<dbReference type="RefSeq" id="NP_079481.2">
    <property type="nucleotide sequence ID" value="NM_025205.4"/>
</dbReference>
<dbReference type="PDB" id="7EMF">
    <property type="method" value="EM"/>
    <property type="resolution" value="3.50 A"/>
    <property type="chains" value="1=1-178"/>
</dbReference>
<dbReference type="PDB" id="7ENA">
    <property type="method" value="EM"/>
    <property type="resolution" value="4.07 A"/>
    <property type="chains" value="e=1-178"/>
</dbReference>
<dbReference type="PDB" id="7ENC">
    <property type="method" value="EM"/>
    <property type="resolution" value="4.13 A"/>
    <property type="chains" value="e=1-178"/>
</dbReference>
<dbReference type="PDB" id="7ENJ">
    <property type="method" value="EM"/>
    <property type="resolution" value="4.40 A"/>
    <property type="chains" value="1=1-178"/>
</dbReference>
<dbReference type="PDB" id="7LBM">
    <property type="method" value="EM"/>
    <property type="resolution" value="4.80 A"/>
    <property type="chains" value="o=1-178"/>
</dbReference>
<dbReference type="PDB" id="7NVR">
    <property type="method" value="EM"/>
    <property type="resolution" value="4.50 A"/>
    <property type="chains" value="q=1-178"/>
</dbReference>
<dbReference type="PDB" id="8GXQ">
    <property type="method" value="EM"/>
    <property type="resolution" value="5.04 A"/>
    <property type="chains" value="e=1-178"/>
</dbReference>
<dbReference type="PDB" id="8GXS">
    <property type="method" value="EM"/>
    <property type="resolution" value="4.16 A"/>
    <property type="chains" value="e=1-178"/>
</dbReference>
<dbReference type="PDB" id="8T9D">
    <property type="method" value="EM"/>
    <property type="resolution" value="4.66 A"/>
    <property type="chains" value="W=1-178"/>
</dbReference>
<dbReference type="PDB" id="8TQW">
    <property type="method" value="EM"/>
    <property type="resolution" value="8.20 A"/>
    <property type="chains" value="1=1-178"/>
</dbReference>
<dbReference type="PDB" id="8TRH">
    <property type="method" value="EM"/>
    <property type="resolution" value="3.70 A"/>
    <property type="chains" value="1=1-178"/>
</dbReference>
<dbReference type="PDBsum" id="7EMF"/>
<dbReference type="PDBsum" id="7ENA"/>
<dbReference type="PDBsum" id="7ENC"/>
<dbReference type="PDBsum" id="7ENJ"/>
<dbReference type="PDBsum" id="7LBM"/>
<dbReference type="PDBsum" id="7NVR"/>
<dbReference type="PDBsum" id="8GXQ"/>
<dbReference type="PDBsum" id="8GXS"/>
<dbReference type="PDBsum" id="8T9D"/>
<dbReference type="PDBsum" id="8TQW"/>
<dbReference type="PDBsum" id="8TRH"/>
<dbReference type="EMDB" id="EMD-12610"/>
<dbReference type="EMDB" id="EMD-23255"/>
<dbReference type="EMDB" id="EMD-31191"/>
<dbReference type="EMDB" id="EMD-31204"/>
<dbReference type="EMDB" id="EMD-31207"/>
<dbReference type="EMDB" id="EMD-31211"/>
<dbReference type="EMDB" id="EMD-34359"/>
<dbReference type="EMDB" id="EMD-34360"/>
<dbReference type="EMDB" id="EMD-41107"/>
<dbReference type="EMDB" id="EMD-41565"/>
<dbReference type="EMDB" id="EMD-41580"/>
<dbReference type="SMR" id="Q9H204"/>
<dbReference type="BioGRID" id="123219">
    <property type="interactions" value="116"/>
</dbReference>
<dbReference type="ComplexPortal" id="CPX-3227">
    <property type="entry name" value="Core mediator complex"/>
</dbReference>
<dbReference type="CORUM" id="Q9H204"/>
<dbReference type="FunCoup" id="Q9H204">
    <property type="interactions" value="3832"/>
</dbReference>
<dbReference type="IntAct" id="Q9H204">
    <property type="interactions" value="104"/>
</dbReference>
<dbReference type="MINT" id="Q9H204"/>
<dbReference type="STRING" id="9606.ENSP00000237380"/>
<dbReference type="GlyGen" id="Q9H204">
    <property type="glycosylation" value="1 site, 1 O-linked glycan (1 site)"/>
</dbReference>
<dbReference type="iPTMnet" id="Q9H204"/>
<dbReference type="PhosphoSitePlus" id="Q9H204"/>
<dbReference type="SwissPalm" id="Q9H204"/>
<dbReference type="BioMuta" id="MED28"/>
<dbReference type="DMDM" id="59799838"/>
<dbReference type="jPOST" id="Q9H204"/>
<dbReference type="MassIVE" id="Q9H204"/>
<dbReference type="PaxDb" id="9606-ENSP00000237380"/>
<dbReference type="PeptideAtlas" id="Q9H204"/>
<dbReference type="ProteomicsDB" id="80465"/>
<dbReference type="Pumba" id="Q9H204"/>
<dbReference type="Antibodypedia" id="23086">
    <property type="antibodies" value="167 antibodies from 28 providers"/>
</dbReference>
<dbReference type="DNASU" id="80306"/>
<dbReference type="Ensembl" id="ENST00000237380.12">
    <property type="protein sequence ID" value="ENSP00000237380.6"/>
    <property type="gene ID" value="ENSG00000118579.13"/>
</dbReference>
<dbReference type="GeneID" id="80306"/>
<dbReference type="KEGG" id="hsa:80306"/>
<dbReference type="MANE-Select" id="ENST00000237380.12">
    <property type="protein sequence ID" value="ENSP00000237380.6"/>
    <property type="RefSeq nucleotide sequence ID" value="NM_025205.5"/>
    <property type="RefSeq protein sequence ID" value="NP_079481.2"/>
</dbReference>
<dbReference type="UCSC" id="uc003gpk.2">
    <property type="organism name" value="human"/>
</dbReference>
<dbReference type="AGR" id="HGNC:24628"/>
<dbReference type="CTD" id="80306"/>
<dbReference type="DisGeNET" id="80306"/>
<dbReference type="GeneCards" id="MED28"/>
<dbReference type="HGNC" id="HGNC:24628">
    <property type="gene designation" value="MED28"/>
</dbReference>
<dbReference type="HPA" id="ENSG00000118579">
    <property type="expression patterns" value="Low tissue specificity"/>
</dbReference>
<dbReference type="MIM" id="610311">
    <property type="type" value="gene"/>
</dbReference>
<dbReference type="neXtProt" id="NX_Q9H204"/>
<dbReference type="OpenTargets" id="ENSG00000118579"/>
<dbReference type="PharmGKB" id="PA134935853"/>
<dbReference type="VEuPathDB" id="HostDB:ENSG00000118579"/>
<dbReference type="eggNOG" id="ENOG502QSN9">
    <property type="taxonomic scope" value="Eukaryota"/>
</dbReference>
<dbReference type="GeneTree" id="ENSGT00390000006192"/>
<dbReference type="InParanoid" id="Q9H204"/>
<dbReference type="OMA" id="MQPSPQH"/>
<dbReference type="OrthoDB" id="2286203at2759"/>
<dbReference type="PAN-GO" id="Q9H204">
    <property type="GO annotations" value="1 GO annotation based on evolutionary models"/>
</dbReference>
<dbReference type="PhylomeDB" id="Q9H204"/>
<dbReference type="TreeFam" id="TF326988"/>
<dbReference type="PathwayCommons" id="Q9H204"/>
<dbReference type="Reactome" id="R-HSA-1989781">
    <property type="pathway name" value="PPARA activates gene expression"/>
</dbReference>
<dbReference type="Reactome" id="R-HSA-381340">
    <property type="pathway name" value="Transcriptional regulation of white adipocyte differentiation"/>
</dbReference>
<dbReference type="Reactome" id="R-HSA-9833110">
    <property type="pathway name" value="RSV-host interactions"/>
</dbReference>
<dbReference type="SignaLink" id="Q9H204"/>
<dbReference type="SIGNOR" id="Q9H204"/>
<dbReference type="BioGRID-ORCS" id="80306">
    <property type="hits" value="721 hits in 1177 CRISPR screens"/>
</dbReference>
<dbReference type="ChiTaRS" id="MED28">
    <property type="organism name" value="human"/>
</dbReference>
<dbReference type="GeneWiki" id="MED28"/>
<dbReference type="GenomeRNAi" id="80306"/>
<dbReference type="Pharos" id="Q9H204">
    <property type="development level" value="Tbio"/>
</dbReference>
<dbReference type="PRO" id="PR:Q9H204"/>
<dbReference type="Proteomes" id="UP000005640">
    <property type="component" value="Chromosome 4"/>
</dbReference>
<dbReference type="RNAct" id="Q9H204">
    <property type="molecule type" value="protein"/>
</dbReference>
<dbReference type="Bgee" id="ENSG00000118579">
    <property type="expression patterns" value="Expressed in amniotic fluid and 203 other cell types or tissues"/>
</dbReference>
<dbReference type="ExpressionAtlas" id="Q9H204">
    <property type="expression patterns" value="baseline and differential"/>
</dbReference>
<dbReference type="GO" id="GO:0070847">
    <property type="term" value="C:core mediator complex"/>
    <property type="evidence" value="ECO:0000353"/>
    <property type="project" value="ComplexPortal"/>
</dbReference>
<dbReference type="GO" id="GO:0030864">
    <property type="term" value="C:cortical actin cytoskeleton"/>
    <property type="evidence" value="ECO:0007669"/>
    <property type="project" value="Ensembl"/>
</dbReference>
<dbReference type="GO" id="GO:0016592">
    <property type="term" value="C:mediator complex"/>
    <property type="evidence" value="ECO:0000318"/>
    <property type="project" value="GO_Central"/>
</dbReference>
<dbReference type="GO" id="GO:0016020">
    <property type="term" value="C:membrane"/>
    <property type="evidence" value="ECO:0007669"/>
    <property type="project" value="UniProtKB-SubCell"/>
</dbReference>
<dbReference type="GO" id="GO:0005654">
    <property type="term" value="C:nucleoplasm"/>
    <property type="evidence" value="ECO:0000314"/>
    <property type="project" value="HPA"/>
</dbReference>
<dbReference type="GO" id="GO:0005634">
    <property type="term" value="C:nucleus"/>
    <property type="evidence" value="ECO:0000314"/>
    <property type="project" value="ComplexPortal"/>
</dbReference>
<dbReference type="GO" id="GO:0003779">
    <property type="term" value="F:actin binding"/>
    <property type="evidence" value="ECO:0007669"/>
    <property type="project" value="UniProtKB-KW"/>
</dbReference>
<dbReference type="GO" id="GO:0051151">
    <property type="term" value="P:negative regulation of smooth muscle cell differentiation"/>
    <property type="evidence" value="ECO:0007669"/>
    <property type="project" value="Ensembl"/>
</dbReference>
<dbReference type="GO" id="GO:0032968">
    <property type="term" value="P:positive regulation of transcription elongation by RNA polymerase II"/>
    <property type="evidence" value="ECO:0000303"/>
    <property type="project" value="ComplexPortal"/>
</dbReference>
<dbReference type="GO" id="GO:0060261">
    <property type="term" value="P:positive regulation of transcription initiation by RNA polymerase II"/>
    <property type="evidence" value="ECO:0000303"/>
    <property type="project" value="ComplexPortal"/>
</dbReference>
<dbReference type="GO" id="GO:0051123">
    <property type="term" value="P:RNA polymerase II preinitiation complex assembly"/>
    <property type="evidence" value="ECO:0000303"/>
    <property type="project" value="ComplexPortal"/>
</dbReference>
<dbReference type="GO" id="GO:0035019">
    <property type="term" value="P:somatic stem cell population maintenance"/>
    <property type="evidence" value="ECO:0007669"/>
    <property type="project" value="Ensembl"/>
</dbReference>
<dbReference type="InterPro" id="IPR021640">
    <property type="entry name" value="Mediator_Med28"/>
</dbReference>
<dbReference type="PANTHER" id="PTHR13512">
    <property type="entry name" value="MEDIATOR COMPLEX SUBUNIT 28"/>
    <property type="match status" value="1"/>
</dbReference>
<dbReference type="PANTHER" id="PTHR13512:SF2">
    <property type="entry name" value="MEDIATOR OF RNA POLYMERASE II TRANSCRIPTION SUBUNIT 28"/>
    <property type="match status" value="1"/>
</dbReference>
<dbReference type="Pfam" id="PF11594">
    <property type="entry name" value="Med28"/>
    <property type="match status" value="1"/>
</dbReference>
<comment type="function">
    <text evidence="5">Component of the Mediator complex, a coactivator involved in the regulated transcription of nearly all RNA polymerase II-dependent genes. Mediator functions as a bridge to convey information from gene-specific regulatory proteins to the basal RNA polymerase II transcription machinery. Mediator is recruited to promoters by direct interactions with regulatory proteins and serves as a scaffold for the assembly of a functional preinitiation complex with RNA polymerase II and the general transcription factors. May be part of a complex containing NF2/merlin that participates in cellular signaling to the actin cytoskeleton downstream of tyrosine kinase signaling pathways.</text>
</comment>
<comment type="subunit">
    <text evidence="4 6">Component of the Mediator complex, which is composed of MED1, MED4, MED6, MED7, MED8, MED9, MED10, MED11, MED12, MED13, MED13L, MED14, MED15, MED16, MED17, MED18, MED19, MED20, MED21, MED22, MED23, MED24, MED25, MED26, MED27, MED29, MED30, MED31, CCNC, CDK8 and CDC2L6/CDK11. The MED12, MED13, CCNC and CDK8 subunits form a distinct module termed the CDK8 module. Mediator containing the CDK8 module is less active than Mediator lacking this module in supporting transcriptional activation. Individual preparations of the Mediator complex lacking one or more distinct subunits have been variously termed ARC, CRSP, DRIP, PC2, SMCC and TRAP. Forms a ternary complex with NF2/merlin and GRB2. Binds to actin.</text>
</comment>
<comment type="interaction">
    <interactant intactId="EBI-514199">
        <id>Q9H204</id>
    </interactant>
    <interactant intactId="EBI-741724">
        <id>Q8NA61</id>
        <label>CBY2</label>
    </interactant>
    <organismsDiffer>false</organismsDiffer>
    <experiments>3</experiments>
</comment>
<comment type="interaction">
    <interactant intactId="EBI-514199">
        <id>Q9H204</id>
    </interactant>
    <interactant intactId="EBI-11524851">
        <id>Q8NA61-2</id>
        <label>CBY2</label>
    </interactant>
    <organismsDiffer>false</organismsDiffer>
    <experiments>3</experiments>
</comment>
<comment type="interaction">
    <interactant intactId="EBI-514199">
        <id>Q9H204</id>
    </interactant>
    <interactant intactId="EBI-21603100">
        <id>P26378-2</id>
        <label>ELAVL4</label>
    </interactant>
    <organismsDiffer>false</organismsDiffer>
    <experiments>3</experiments>
</comment>
<comment type="interaction">
    <interactant intactId="EBI-514199">
        <id>Q9H204</id>
    </interactant>
    <interactant intactId="EBI-515315">
        <id>P06241</id>
        <label>FYN</label>
    </interactant>
    <organismsDiffer>false</organismsDiffer>
    <experiments>6</experiments>
</comment>
<comment type="interaction">
    <interactant intactId="EBI-514199">
        <id>Q9H204</id>
    </interactant>
    <interactant intactId="EBI-401755">
        <id>P62993</id>
        <label>GRB2</label>
    </interactant>
    <organismsDiffer>false</organismsDiffer>
    <experiments>3</experiments>
</comment>
<comment type="interaction">
    <interactant intactId="EBI-514199">
        <id>Q9H204</id>
    </interactant>
    <interactant intactId="EBI-466029">
        <id>P42858</id>
        <label>HTT</label>
    </interactant>
    <organismsDiffer>false</organismsDiffer>
    <experiments>9</experiments>
</comment>
<comment type="interaction">
    <interactant intactId="EBI-514199">
        <id>Q9H204</id>
    </interactant>
    <interactant intactId="EBI-1348">
        <id>P06239</id>
        <label>LCK</label>
    </interactant>
    <organismsDiffer>false</organismsDiffer>
    <experiments>4</experiments>
</comment>
<comment type="interaction">
    <interactant intactId="EBI-514199">
        <id>Q9H204</id>
    </interactant>
    <interactant intactId="EBI-310506">
        <id>Q5TCQ9</id>
        <label>MAGI3</label>
    </interactant>
    <organismsDiffer>false</organismsDiffer>
    <experiments>2</experiments>
</comment>
<comment type="interaction">
    <interactant intactId="EBI-514199">
        <id>Q9H204</id>
    </interactant>
    <interactant intactId="EBI-394562">
        <id>Q9NVC6</id>
        <label>MED17</label>
    </interactant>
    <organismsDiffer>false</organismsDiffer>
    <experiments>6</experiments>
</comment>
<comment type="interaction">
    <interactant intactId="EBI-514199">
        <id>Q9H204</id>
    </interactant>
    <interactant intactId="EBI-394687">
        <id>Q15528</id>
        <label>MED22</label>
    </interactant>
    <organismsDiffer>false</organismsDiffer>
    <experiments>6</experiments>
</comment>
<comment type="interaction">
    <interactant intactId="EBI-514199">
        <id>Q9H204</id>
    </interactant>
    <interactant intactId="EBI-394603">
        <id>Q6P2C8</id>
        <label>MED27</label>
    </interactant>
    <organismsDiffer>false</organismsDiffer>
    <experiments>5</experiments>
</comment>
<comment type="interaction">
    <interactant intactId="EBI-514199">
        <id>Q9H204</id>
    </interactant>
    <interactant intactId="EBI-394656">
        <id>Q9NX70</id>
        <label>MED29</label>
    </interactant>
    <organismsDiffer>false</organismsDiffer>
    <experiments>8</experiments>
</comment>
<comment type="interaction">
    <interactant intactId="EBI-514199">
        <id>Q9H204</id>
    </interactant>
    <interactant intactId="EBI-394659">
        <id>Q96HR3</id>
        <label>MED30</label>
    </interactant>
    <organismsDiffer>false</organismsDiffer>
    <experiments>9</experiments>
</comment>
<comment type="interaction">
    <interactant intactId="EBI-514199">
        <id>Q9H204</id>
    </interactant>
    <interactant intactId="EBI-394624">
        <id>O75586</id>
        <label>MED6</label>
    </interactant>
    <organismsDiffer>false</organismsDiffer>
    <experiments>5</experiments>
</comment>
<comment type="interaction">
    <interactant intactId="EBI-514199">
        <id>Q9H204</id>
    </interactant>
    <interactant intactId="EBI-2801965">
        <id>Q5JXC2</id>
        <label>MIIP</label>
    </interactant>
    <organismsDiffer>false</organismsDiffer>
    <experiments>3</experiments>
</comment>
<comment type="interaction">
    <interactant intactId="EBI-514199">
        <id>Q9H204</id>
    </interactant>
    <interactant intactId="EBI-716486">
        <id>Q92597</id>
        <label>NDRG1</label>
    </interactant>
    <organismsDiffer>false</organismsDiffer>
    <experiments>3</experiments>
</comment>
<comment type="interaction">
    <interactant intactId="EBI-514199">
        <id>Q9H204</id>
    </interactant>
    <interactant intactId="EBI-1014472">
        <id>P35240</id>
        <label>NF2</label>
    </interactant>
    <organismsDiffer>false</organismsDiffer>
    <experiments>4</experiments>
</comment>
<comment type="interaction">
    <interactant intactId="EBI-514199">
        <id>Q9H204</id>
    </interactant>
    <interactant intactId="EBI-1014500">
        <id>P35240-1</id>
        <label>NF2</label>
    </interactant>
    <organismsDiffer>false</organismsDiffer>
    <experiments>2</experiments>
</comment>
<comment type="interaction">
    <interactant intactId="EBI-514199">
        <id>Q9H204</id>
    </interactant>
    <interactant intactId="EBI-912440">
        <id>Q96LA8</id>
        <label>PRMT6</label>
    </interactant>
    <organismsDiffer>false</organismsDiffer>
    <experiments>2</experiments>
</comment>
<comment type="interaction">
    <interactant intactId="EBI-514199">
        <id>Q9H204</id>
    </interactant>
    <interactant intactId="EBI-1053259">
        <id>Q9UHX1</id>
        <label>PUF60</label>
    </interactant>
    <organismsDiffer>false</organismsDiffer>
    <experiments>6</experiments>
</comment>
<comment type="interaction">
    <interactant intactId="EBI-514199">
        <id>Q9H204</id>
    </interactant>
    <interactant intactId="EBI-621482">
        <id>P12931</id>
        <label>SRC</label>
    </interactant>
    <organismsDiffer>false</organismsDiffer>
    <experiments>3</experiments>
</comment>
<comment type="interaction">
    <interactant intactId="EBI-514199">
        <id>Q9H204</id>
    </interactant>
    <interactant intactId="EBI-3921347">
        <id>P51687</id>
        <label>SUOX</label>
    </interactant>
    <organismsDiffer>false</organismsDiffer>
    <experiments>3</experiments>
</comment>
<comment type="interaction">
    <interactant intactId="EBI-514199">
        <id>Q9H204</id>
    </interactant>
    <interactant intactId="EBI-17721485">
        <id>Q8WWU5-7</id>
        <label>TCP11</label>
    </interactant>
    <organismsDiffer>false</organismsDiffer>
    <experiments>3</experiments>
</comment>
<comment type="interaction">
    <interactant intactId="EBI-514199">
        <id>Q9H204</id>
    </interactant>
    <interactant intactId="EBI-515331">
        <id>P07947</id>
        <label>YES1</label>
    </interactant>
    <organismsDiffer>false</organismsDiffer>
    <experiments>2</experiments>
</comment>
<comment type="interaction">
    <interactant intactId="EBI-514199">
        <id>Q9H204</id>
    </interactant>
    <interactant intactId="EBI-6260909">
        <id>Q9D8C6</id>
        <label>Med11</label>
    </interactant>
    <organismsDiffer>true</organismsDiffer>
    <experiments>2</experiments>
</comment>
<comment type="interaction">
    <interactant intactId="EBI-514199">
        <id>Q9H204</id>
    </interactant>
    <interactant intactId="EBI-309220">
        <id>Q9CQI9</id>
        <label>Med30</label>
    </interactant>
    <organismsDiffer>true</organismsDiffer>
    <experiments>2</experiments>
</comment>
<comment type="interaction">
    <interactant intactId="EBI-514199">
        <id>Q9H204</id>
    </interactant>
    <interactant intactId="EBI-7990252">
        <id>Q9D7W5</id>
        <label>Med8</label>
    </interactant>
    <organismsDiffer>true</organismsDiffer>
    <experiments>2</experiments>
</comment>
<comment type="interaction">
    <interactant intactId="EBI-514199">
        <id>Q9H204</id>
    </interactant>
    <interactant intactId="EBI-2603114">
        <id>P03255</id>
    </interactant>
    <organismsDiffer>true</organismsDiffer>
    <experiments>2</experiments>
</comment>
<comment type="subcellular location">
    <subcellularLocation>
        <location evidence="5">Nucleus</location>
    </subcellularLocation>
    <subcellularLocation>
        <location evidence="5">Cytoplasm</location>
    </subcellularLocation>
    <subcellularLocation>
        <location evidence="5">Membrane</location>
        <topology evidence="5">Peripheral membrane protein</topology>
    </subcellularLocation>
    <text>According to PubMed:15467741, it is cytoplasmic and mainly membrane-associated.</text>
</comment>
<comment type="tissue specificity">
    <text evidence="5">Widely expressed. Highly expressed in vascular tissues such as placenta, testis and liver.</text>
</comment>
<comment type="induction">
    <text evidence="3">Up-regulated by endothelial cells when exposed to tumor conditional media.</text>
</comment>
<comment type="similarity">
    <text evidence="7">Belongs to the Mediator complex subunit 28 family.</text>
</comment>
<comment type="sequence caution" evidence="7">
    <conflict type="frameshift">
        <sequence resource="EMBL-CDS" id="AAK11563"/>
    </conflict>
</comment>
<comment type="online information" name="Atlas of Genetics and Cytogenetics in Oncology and Haematology">
    <link uri="https://atlasgeneticsoncology.org/gene/50131/MED28"/>
</comment>
<name>MED28_HUMAN</name>
<feature type="chain" id="PRO_0000113981" description="Mediator of RNA polymerase II transcription subunit 28">
    <location>
        <begin position="1"/>
        <end position="178"/>
    </location>
</feature>
<feature type="region of interest" description="Disordered" evidence="2">
    <location>
        <begin position="1"/>
        <end position="44"/>
    </location>
</feature>
<feature type="coiled-coil region" evidence="1">
    <location>
        <begin position="109"/>
        <end position="145"/>
    </location>
</feature>
<feature type="compositionally biased region" description="Pro residues" evidence="2">
    <location>
        <begin position="13"/>
        <end position="23"/>
    </location>
</feature>
<feature type="helix" evidence="8">
    <location>
        <begin position="44"/>
        <end position="55"/>
    </location>
</feature>
<feature type="turn" evidence="8">
    <location>
        <begin position="57"/>
        <end position="59"/>
    </location>
</feature>
<feature type="helix" evidence="8">
    <location>
        <begin position="70"/>
        <end position="105"/>
    </location>
</feature>
<feature type="helix" evidence="8">
    <location>
        <begin position="108"/>
        <end position="143"/>
    </location>
</feature>
<sequence>MAAPLGGMFSGQPPGPPQAPPGLPGQASLLQAAPGAPRPSSSTLVDELESSFEACFASLVSQDYVNGTDQEEIRTGVDQCIQKFLDIARQTECFFLQKRLQLSVQKPEQVIKEDVSELRNELQRKDALVQKHLTKLRHWQQVLEDINVQHKKPADIPQGSLAYLEQASANIPAPLKPT</sequence>
<gene>
    <name type="primary">MED28</name>
    <name type="synonym">EG1</name>
    <name type="ORF">FKSG20</name>
</gene>